<gene>
    <name evidence="1" type="primary">rplW</name>
    <name type="ordered locus">CTLon_0783</name>
</gene>
<feature type="chain" id="PRO_1000144553" description="Large ribosomal subunit protein uL23">
    <location>
        <begin position="1"/>
        <end position="111"/>
    </location>
</feature>
<comment type="function">
    <text evidence="1">One of the early assembly proteins it binds 23S rRNA. One of the proteins that surrounds the polypeptide exit tunnel on the outside of the ribosome. Forms the main docking site for trigger factor binding to the ribosome.</text>
</comment>
<comment type="subunit">
    <text evidence="1">Part of the 50S ribosomal subunit. Contacts protein L29, and trigger factor when it is bound to the ribosome.</text>
</comment>
<comment type="similarity">
    <text evidence="1">Belongs to the universal ribosomal protein uL23 family.</text>
</comment>
<protein>
    <recommendedName>
        <fullName evidence="1">Large ribosomal subunit protein uL23</fullName>
    </recommendedName>
    <alternativeName>
        <fullName evidence="2">50S ribosomal protein L23</fullName>
    </alternativeName>
</protein>
<organism>
    <name type="scientific">Chlamydia trachomatis serovar L2b (strain UCH-1/proctitis)</name>
    <dbReference type="NCBI Taxonomy" id="471473"/>
    <lineage>
        <taxon>Bacteria</taxon>
        <taxon>Pseudomonadati</taxon>
        <taxon>Chlamydiota</taxon>
        <taxon>Chlamydiia</taxon>
        <taxon>Chlamydiales</taxon>
        <taxon>Chlamydiaceae</taxon>
        <taxon>Chlamydia/Chlamydophila group</taxon>
        <taxon>Chlamydia</taxon>
    </lineage>
</organism>
<name>RL23_CHLTB</name>
<sequence>MKDPYDVVKRHYVTEKAKMLEGLSLGDGEGKKKGSFCKDPKYTFIVAGDATKPMIAEAIEAIYSAKGVKVKKVNTMCVKPQPTRIFRGRRKGRTAGFKKAIVTFVDGHSIG</sequence>
<accession>B0BCG5</accession>
<keyword id="KW-0687">Ribonucleoprotein</keyword>
<keyword id="KW-0689">Ribosomal protein</keyword>
<keyword id="KW-0694">RNA-binding</keyword>
<keyword id="KW-0699">rRNA-binding</keyword>
<proteinExistence type="inferred from homology"/>
<dbReference type="EMBL" id="AM884177">
    <property type="protein sequence ID" value="CAP07180.1"/>
    <property type="molecule type" value="Genomic_DNA"/>
</dbReference>
<dbReference type="RefSeq" id="WP_009872725.1">
    <property type="nucleotide sequence ID" value="NC_010280.2"/>
</dbReference>
<dbReference type="SMR" id="B0BCG5"/>
<dbReference type="KEGG" id="ctl:CTLon_0783"/>
<dbReference type="HOGENOM" id="CLU_037562_3_1_0"/>
<dbReference type="Proteomes" id="UP001154401">
    <property type="component" value="Chromosome"/>
</dbReference>
<dbReference type="GO" id="GO:1990904">
    <property type="term" value="C:ribonucleoprotein complex"/>
    <property type="evidence" value="ECO:0007669"/>
    <property type="project" value="UniProtKB-KW"/>
</dbReference>
<dbReference type="GO" id="GO:0005840">
    <property type="term" value="C:ribosome"/>
    <property type="evidence" value="ECO:0007669"/>
    <property type="project" value="UniProtKB-KW"/>
</dbReference>
<dbReference type="GO" id="GO:0019843">
    <property type="term" value="F:rRNA binding"/>
    <property type="evidence" value="ECO:0007669"/>
    <property type="project" value="UniProtKB-UniRule"/>
</dbReference>
<dbReference type="GO" id="GO:0003735">
    <property type="term" value="F:structural constituent of ribosome"/>
    <property type="evidence" value="ECO:0007669"/>
    <property type="project" value="InterPro"/>
</dbReference>
<dbReference type="GO" id="GO:0006412">
    <property type="term" value="P:translation"/>
    <property type="evidence" value="ECO:0007669"/>
    <property type="project" value="UniProtKB-UniRule"/>
</dbReference>
<dbReference type="Gene3D" id="3.30.70.330">
    <property type="match status" value="1"/>
</dbReference>
<dbReference type="HAMAP" id="MF_01369_B">
    <property type="entry name" value="Ribosomal_uL23_B"/>
    <property type="match status" value="1"/>
</dbReference>
<dbReference type="InterPro" id="IPR012677">
    <property type="entry name" value="Nucleotide-bd_a/b_plait_sf"/>
</dbReference>
<dbReference type="InterPro" id="IPR013025">
    <property type="entry name" value="Ribosomal_uL23-like"/>
</dbReference>
<dbReference type="InterPro" id="IPR012678">
    <property type="entry name" value="Ribosomal_uL23/eL15/eS24_sf"/>
</dbReference>
<dbReference type="NCBIfam" id="NF004362">
    <property type="entry name" value="PRK05738.2-2"/>
    <property type="match status" value="1"/>
</dbReference>
<dbReference type="Pfam" id="PF00276">
    <property type="entry name" value="Ribosomal_L23"/>
    <property type="match status" value="1"/>
</dbReference>
<dbReference type="SUPFAM" id="SSF54189">
    <property type="entry name" value="Ribosomal proteins S24e, L23 and L15e"/>
    <property type="match status" value="1"/>
</dbReference>
<evidence type="ECO:0000255" key="1">
    <source>
        <dbReference type="HAMAP-Rule" id="MF_01369"/>
    </source>
</evidence>
<evidence type="ECO:0000305" key="2"/>
<reference key="1">
    <citation type="journal article" date="2008" name="Genome Res.">
        <title>Chlamydia trachomatis: genome sequence analysis of lymphogranuloma venereum isolates.</title>
        <authorList>
            <person name="Thomson N.R."/>
            <person name="Holden M.T.G."/>
            <person name="Carder C."/>
            <person name="Lennard N."/>
            <person name="Lockey S.J."/>
            <person name="Marsh P."/>
            <person name="Skipp P."/>
            <person name="O'Connor C.D."/>
            <person name="Goodhead I."/>
            <person name="Norbertzcak H."/>
            <person name="Harris B."/>
            <person name="Ormond D."/>
            <person name="Rance R."/>
            <person name="Quail M.A."/>
            <person name="Parkhill J."/>
            <person name="Stephens R.S."/>
            <person name="Clarke I.N."/>
        </authorList>
    </citation>
    <scope>NUCLEOTIDE SEQUENCE [LARGE SCALE GENOMIC DNA]</scope>
    <source>
        <strain>UCH-1/proctitis</strain>
    </source>
</reference>